<proteinExistence type="evidence at transcript level"/>
<sequence>MAKEGLGLEITELRLGLPDAEHQVSVVNKKNEKKRAFSEIDDGVGDENSSSGGGDRKMETNKSQVVGWPPVCSYRKKNSMNEGASKMYVKVSMDGAPFLRKIDLGLHKGYSDLALALDKLFGCYGMVEALKNADNSEHVPIYEDKDGDWMLVGDVPWEMFMESCKRLRIMKKSDAKGFGLQPKGSLKGFIESAAK</sequence>
<evidence type="ECO:0000250" key="1"/>
<evidence type="ECO:0000255" key="2">
    <source>
        <dbReference type="PROSITE-ProRule" id="PRU01081"/>
    </source>
</evidence>
<evidence type="ECO:0000256" key="3">
    <source>
        <dbReference type="SAM" id="MobiDB-lite"/>
    </source>
</evidence>
<evidence type="ECO:0000305" key="4"/>
<protein>
    <recommendedName>
        <fullName>Auxin-induced protein AUX22</fullName>
    </recommendedName>
</protein>
<name>AUX22_SOYBN</name>
<feature type="chain" id="PRO_0000112868" description="Auxin-induced protein AUX22">
    <location>
        <begin position="1"/>
        <end position="195"/>
    </location>
</feature>
<feature type="domain" description="PB1" evidence="2">
    <location>
        <begin position="86"/>
        <end position="174"/>
    </location>
</feature>
<feature type="region of interest" description="Disordered" evidence="3">
    <location>
        <begin position="37"/>
        <end position="60"/>
    </location>
</feature>
<feature type="short sequence motif" description="EAR-like (transcriptional repression)">
    <location>
        <begin position="13"/>
        <end position="17"/>
    </location>
</feature>
<organism>
    <name type="scientific">Glycine max</name>
    <name type="common">Soybean</name>
    <name type="synonym">Glycine hispida</name>
    <dbReference type="NCBI Taxonomy" id="3847"/>
    <lineage>
        <taxon>Eukaryota</taxon>
        <taxon>Viridiplantae</taxon>
        <taxon>Streptophyta</taxon>
        <taxon>Embryophyta</taxon>
        <taxon>Tracheophyta</taxon>
        <taxon>Spermatophyta</taxon>
        <taxon>Magnoliopsida</taxon>
        <taxon>eudicotyledons</taxon>
        <taxon>Gunneridae</taxon>
        <taxon>Pentapetalae</taxon>
        <taxon>rosids</taxon>
        <taxon>fabids</taxon>
        <taxon>Fabales</taxon>
        <taxon>Fabaceae</taxon>
        <taxon>Papilionoideae</taxon>
        <taxon>50 kb inversion clade</taxon>
        <taxon>NPAAA clade</taxon>
        <taxon>indigoferoid/millettioid clade</taxon>
        <taxon>Phaseoleae</taxon>
        <taxon>Glycine</taxon>
        <taxon>Glycine subgen. Soja</taxon>
    </lineage>
</organism>
<keyword id="KW-0927">Auxin signaling pathway</keyword>
<keyword id="KW-0539">Nucleus</keyword>
<keyword id="KW-1185">Reference proteome</keyword>
<keyword id="KW-0678">Repressor</keyword>
<keyword id="KW-0804">Transcription</keyword>
<keyword id="KW-0805">Transcription regulation</keyword>
<dbReference type="EMBL" id="J03920">
    <property type="protein sequence ID" value="AAA33944.1"/>
    <property type="molecule type" value="mRNA"/>
</dbReference>
<dbReference type="PIR" id="B28993">
    <property type="entry name" value="B28993"/>
</dbReference>
<dbReference type="RefSeq" id="NP_001237849.1">
    <property type="nucleotide sequence ID" value="NM_001250920.1"/>
</dbReference>
<dbReference type="SMR" id="P13088"/>
<dbReference type="FunCoup" id="P13088">
    <property type="interactions" value="481"/>
</dbReference>
<dbReference type="STRING" id="3847.P13088"/>
<dbReference type="PaxDb" id="3847-GLYMA08G22190.1"/>
<dbReference type="EnsemblPlants" id="KRH44390">
    <property type="protein sequence ID" value="KRH44390"/>
    <property type="gene ID" value="GLYMA_08G207900"/>
</dbReference>
<dbReference type="GeneID" id="547784"/>
<dbReference type="Gramene" id="KRH44390">
    <property type="protein sequence ID" value="KRH44390"/>
    <property type="gene ID" value="GLYMA_08G207900"/>
</dbReference>
<dbReference type="KEGG" id="gmx:547784"/>
<dbReference type="eggNOG" id="ENOG502RXTN">
    <property type="taxonomic scope" value="Eukaryota"/>
</dbReference>
<dbReference type="HOGENOM" id="CLU_049393_0_1_1"/>
<dbReference type="InParanoid" id="P13088"/>
<dbReference type="OMA" id="CSYRKRN"/>
<dbReference type="OrthoDB" id="1926344at2759"/>
<dbReference type="Proteomes" id="UP000008827">
    <property type="component" value="Chromosome 8"/>
</dbReference>
<dbReference type="GO" id="GO:0005634">
    <property type="term" value="C:nucleus"/>
    <property type="evidence" value="ECO:0007669"/>
    <property type="project" value="UniProtKB-SubCell"/>
</dbReference>
<dbReference type="GO" id="GO:0009734">
    <property type="term" value="P:auxin-activated signaling pathway"/>
    <property type="evidence" value="ECO:0007669"/>
    <property type="project" value="UniProtKB-KW"/>
</dbReference>
<dbReference type="GO" id="GO:0006355">
    <property type="term" value="P:regulation of DNA-templated transcription"/>
    <property type="evidence" value="ECO:0007669"/>
    <property type="project" value="InterPro"/>
</dbReference>
<dbReference type="FunFam" id="3.10.20.90:FF:000078">
    <property type="entry name" value="Auxin-responsive protein"/>
    <property type="match status" value="1"/>
</dbReference>
<dbReference type="Gene3D" id="3.10.20.90">
    <property type="entry name" value="Phosphatidylinositol 3-kinase Catalytic Subunit, Chain A, domain 1"/>
    <property type="match status" value="1"/>
</dbReference>
<dbReference type="InterPro" id="IPR033389">
    <property type="entry name" value="AUX/IAA_dom"/>
</dbReference>
<dbReference type="InterPro" id="IPR003311">
    <property type="entry name" value="AUX_IAA"/>
</dbReference>
<dbReference type="InterPro" id="IPR053793">
    <property type="entry name" value="PB1-like"/>
</dbReference>
<dbReference type="PANTHER" id="PTHR31734">
    <property type="entry name" value="AUXIN-RESPONSIVE PROTEIN IAA17"/>
    <property type="match status" value="1"/>
</dbReference>
<dbReference type="PANTHER" id="PTHR31734:SF121">
    <property type="entry name" value="AUXIN-RESPONSIVE PROTEIN IAA19"/>
    <property type="match status" value="1"/>
</dbReference>
<dbReference type="Pfam" id="PF02309">
    <property type="entry name" value="AUX_IAA"/>
    <property type="match status" value="1"/>
</dbReference>
<dbReference type="SUPFAM" id="SSF54277">
    <property type="entry name" value="CAD &amp; PB1 domains"/>
    <property type="match status" value="1"/>
</dbReference>
<dbReference type="PROSITE" id="PS51745">
    <property type="entry name" value="PB1"/>
    <property type="match status" value="1"/>
</dbReference>
<comment type="function">
    <text evidence="1">Aux/IAA proteins are short-lived transcriptional factors that function as repressors of early auxin response genes at low auxin concentrations. Repression is thought to result from the interaction with auxin response factors (ARFs), proteins that bind to the auxin-responsive promoter element (AuxRE). Formation of heterodimers with ARF proteins may alter their ability to modulate early auxin response genes expression (By similarity).</text>
</comment>
<comment type="subunit">
    <text evidence="1">Homodimers and heterodimers.</text>
</comment>
<comment type="subcellular location">
    <subcellularLocation>
        <location evidence="1">Nucleus</location>
    </subcellularLocation>
</comment>
<comment type="induction">
    <text>By auxin.</text>
</comment>
<comment type="domain">
    <text evidence="1">The N-terminal half of the protein contains two conserved domains I and II. Domain I includes a slightly degenerated ERF-associated amphiphilic repression (EAR) motif which seems to be involved in the activity of transcriptional repression. Domain II is required for the correct degradation of the protein through the SCF-mediated ubiquitin-proteasome pathway. Interactions between Aux/IAA proteins and auxin response factors (ARFs) occur through their C-terminal dimerization domains III and IV (By similarity).</text>
</comment>
<comment type="similarity">
    <text evidence="4">Belongs to the Aux/IAA family.</text>
</comment>
<gene>
    <name type="primary">AUX22</name>
</gene>
<accession>P13088</accession>
<reference key="1">
    <citation type="journal article" date="1988" name="J. Biol. Chem.">
        <title>Sequence and characterization of two auxin-regulated genes from soybean.</title>
        <authorList>
            <person name="Ainley W.M."/>
            <person name="Walker J.C."/>
            <person name="Nagao R.T."/>
            <person name="Key J.L."/>
        </authorList>
    </citation>
    <scope>NUCLEOTIDE SEQUENCE [MRNA]</scope>
    <source>
        <strain>cv. Corsoy</strain>
    </source>
</reference>